<comment type="function">
    <text evidence="5">Can degrade fibronectin, laminin, gelatins of type I, III, IV, and V; collagens III, IV, X, and IX, and cartilage proteoglycans. Activates procollagenase.</text>
</comment>
<comment type="function">
    <text evidence="3">Metalloproteinase with a rather broad substrate specificity that can degrade fibronectin, laminin, gelatins of type I, III, IV, and V; collagens III, IV, X, and IX, and cartilage proteoglycans. Activates different molecules including growth factors, plasminogen or other matrix metalloproteinases such as MMP9. Once released into the extracellular matrix (ECM), the inactive pro-enzyme is activated by the plasmin cascade signaling pathway. Also acts intracellularly. For example, in dopaminergic neurons, gets activated by the serine protease HTRA2 upon stress and plays a pivotal role in DA neuronal degeneration by mediating microglial activation and alpha-synuclein/SNCA cleavage. In addition, plays a role in immune response and possesses antiviral activity against various viruses. Mechanistically, translocates from the cytoplasm into the cell nucleus upon virus infection to influence NF-kappa-B activities.</text>
</comment>
<comment type="catalytic activity">
    <reaction evidence="5 6 7">
        <text>Preferential cleavage where P1', P2' and P3' are hydrophobic residues.</text>
        <dbReference type="EC" id="3.4.24.17"/>
    </reaction>
</comment>
<comment type="cofactor">
    <cofactor evidence="5">
        <name>Ca(2+)</name>
        <dbReference type="ChEBI" id="CHEBI:29108"/>
    </cofactor>
    <text evidence="1">Binds 4 Ca(2+) ions per subunit.</text>
</comment>
<comment type="cofactor">
    <cofactor evidence="1">
        <name>Zn(2+)</name>
        <dbReference type="ChEBI" id="CHEBI:29105"/>
    </cofactor>
    <text evidence="1">Binds 2 Zn(2+) ions per subunit.</text>
</comment>
<comment type="activity regulation">
    <text evidence="5 6 7">Inhibited by a synthetic peptide corresponding to the inhibitory cysteine switch motif (PubMed:1988438). Inhibited by ethylenediaminetetraacetic acid (EDTA), 1,10-pheanthroline, 2-mecaptoethanol, dithiothreitol and metalloproteinase inhibitor protein TIMP (PubMed:1963430, PubMed:2841336).</text>
</comment>
<comment type="subcellular location">
    <subcellularLocation>
        <location evidence="9">Secreted</location>
        <location evidence="9">Extracellular space</location>
        <location evidence="9">Extracellular matrix</location>
    </subcellularLocation>
    <subcellularLocation>
        <location evidence="5 6 7">Secreted</location>
    </subcellularLocation>
</comment>
<comment type="induction">
    <text>By epidermal growth factor and is increased in FR3T3 and RAT-1 fibroblasts transformed by polyoma virus, Rous sarcoma virus, or the human cellular H-Ras oncogene.</text>
</comment>
<comment type="domain">
    <text evidence="6 7">The conserved cysteine present in the cysteine-switch motif binds the catalytic zinc ion, thus inhibiting the enzyme. The dissociation of the cysteine from the zinc ion upon the activation-peptide release activates the enzyme.</text>
</comment>
<comment type="similarity">
    <text evidence="9">Belongs to the peptidase M10A family.</text>
</comment>
<keyword id="KW-0106">Calcium</keyword>
<keyword id="KW-0177">Collagen degradation</keyword>
<keyword id="KW-0903">Direct protein sequencing</keyword>
<keyword id="KW-1015">Disulfide bond</keyword>
<keyword id="KW-0272">Extracellular matrix</keyword>
<keyword id="KW-0325">Glycoprotein</keyword>
<keyword id="KW-0378">Hydrolase</keyword>
<keyword id="KW-0391">Immunity</keyword>
<keyword id="KW-0399">Innate immunity</keyword>
<keyword id="KW-0479">Metal-binding</keyword>
<keyword id="KW-0482">Metalloprotease</keyword>
<keyword id="KW-0645">Protease</keyword>
<keyword id="KW-1185">Reference proteome</keyword>
<keyword id="KW-0677">Repeat</keyword>
<keyword id="KW-0964">Secreted</keyword>
<keyword id="KW-0732">Signal</keyword>
<keyword id="KW-0862">Zinc</keyword>
<keyword id="KW-0865">Zymogen</keyword>
<protein>
    <recommendedName>
        <fullName>Stromelysin-1</fullName>
        <shortName>SL-1</shortName>
        <ecNumber evidence="5 6 7">3.4.24.17</ecNumber>
    </recommendedName>
    <alternativeName>
        <fullName>Matrix metalloproteinase-3</fullName>
        <shortName>MMP-3</shortName>
    </alternativeName>
    <alternativeName>
        <fullName>PTR1 protein</fullName>
    </alternativeName>
    <alternativeName>
        <fullName>Transin-1</fullName>
    </alternativeName>
</protein>
<sequence>MKGLPVLLWLCTAVCSSYPLHGSEEDAGMEVLQKYLENYYGLEKDVKQFTKKKDSSPVVKKIQEMQKFLGLKMTGKLDSNTMELMHKPRCGVPDVGGFSTFPGSPKWRKNHISYRIVNYTLDLPRESVDSAIERALKVWEEVTPLTFSRISEGEADIMISFAVEEHGDFIPFDGPGMVLAHAYAPGPGTNGDAHFDDDERWTDDVTGTNLFLVAAHELGHSLGLFHSANAEALMYPVYKSSTDLARFHLSQDDVDGIQSLYGPPTESPDVLVVPTKSNSLDPETLPMCSSALSFDAVSTLRGEVLFFKDRHFWRKSLRTPEPGFYLISSFWPSLPSNMDAAYEVTNRDTVFILKGNQIWAIRGHEELAGYPKSIHTLGLPETVQKIDAAISLKDQKKTYFFVEDKFWRFDEKKQSMDPEFPRKIAENFPGIGTKVDAVFEAFGFLYFFSGSSQLEFDPNAGKVTHILKSNSWFNC</sequence>
<proteinExistence type="evidence at protein level"/>
<name>MMP3_RAT</name>
<gene>
    <name type="primary">Mmp3</name>
</gene>
<dbReference type="EC" id="3.4.24.17" evidence="5 6 7"/>
<dbReference type="EMBL" id="X02601">
    <property type="protein sequence ID" value="CAA26448.1"/>
    <property type="molecule type" value="mRNA"/>
</dbReference>
<dbReference type="PIR" id="A00997">
    <property type="entry name" value="KCRTIH"/>
</dbReference>
<dbReference type="SMR" id="P03957"/>
<dbReference type="FunCoup" id="P03957">
    <property type="interactions" value="25"/>
</dbReference>
<dbReference type="STRING" id="10116.ENSRNOP00000012310"/>
<dbReference type="MEROPS" id="M10.005"/>
<dbReference type="MoonProt" id="P03957"/>
<dbReference type="GlyCosmos" id="P03957">
    <property type="glycosylation" value="1 site, No reported glycans"/>
</dbReference>
<dbReference type="GlyGen" id="P03957">
    <property type="glycosylation" value="1 site"/>
</dbReference>
<dbReference type="PhosphoSitePlus" id="P03957"/>
<dbReference type="ABCD" id="P03957">
    <property type="antibodies" value="1 sequenced antibody"/>
</dbReference>
<dbReference type="UCSC" id="RGD:621317">
    <property type="organism name" value="rat"/>
</dbReference>
<dbReference type="AGR" id="RGD:621317"/>
<dbReference type="RGD" id="621317">
    <property type="gene designation" value="Mmp3"/>
</dbReference>
<dbReference type="InParanoid" id="P03957"/>
<dbReference type="PhylomeDB" id="P03957"/>
<dbReference type="Reactome" id="R-RNO-1442490">
    <property type="pathway name" value="Collagen degradation"/>
</dbReference>
<dbReference type="Reactome" id="R-RNO-1474228">
    <property type="pathway name" value="Degradation of the extracellular matrix"/>
</dbReference>
<dbReference type="Reactome" id="R-RNO-1592389">
    <property type="pathway name" value="Activation of Matrix Metalloproteinases"/>
</dbReference>
<dbReference type="Reactome" id="R-RNO-2022090">
    <property type="pathway name" value="Assembly of collagen fibrils and other multimeric structures"/>
</dbReference>
<dbReference type="Reactome" id="R-RNO-2179392">
    <property type="pathway name" value="EGFR Transactivation by Gastrin"/>
</dbReference>
<dbReference type="Reactome" id="R-RNO-9009391">
    <property type="pathway name" value="Extra-nuclear estrogen signaling"/>
</dbReference>
<dbReference type="PRO" id="PR:P03957"/>
<dbReference type="Proteomes" id="UP000002494">
    <property type="component" value="Unplaced"/>
</dbReference>
<dbReference type="GO" id="GO:0044297">
    <property type="term" value="C:cell body"/>
    <property type="evidence" value="ECO:0000314"/>
    <property type="project" value="RGD"/>
</dbReference>
<dbReference type="GO" id="GO:0005829">
    <property type="term" value="C:cytosol"/>
    <property type="evidence" value="ECO:0000266"/>
    <property type="project" value="RGD"/>
</dbReference>
<dbReference type="GO" id="GO:0030425">
    <property type="term" value="C:dendrite"/>
    <property type="evidence" value="ECO:0000314"/>
    <property type="project" value="RGD"/>
</dbReference>
<dbReference type="GO" id="GO:0031012">
    <property type="term" value="C:extracellular matrix"/>
    <property type="evidence" value="ECO:0007669"/>
    <property type="project" value="InterPro"/>
</dbReference>
<dbReference type="GO" id="GO:0005615">
    <property type="term" value="C:extracellular space"/>
    <property type="evidence" value="ECO:0000314"/>
    <property type="project" value="RGD"/>
</dbReference>
<dbReference type="GO" id="GO:0005739">
    <property type="term" value="C:mitochondrion"/>
    <property type="evidence" value="ECO:0000266"/>
    <property type="project" value="RGD"/>
</dbReference>
<dbReference type="GO" id="GO:0032991">
    <property type="term" value="C:protein-containing complex"/>
    <property type="evidence" value="ECO:0000314"/>
    <property type="project" value="RGD"/>
</dbReference>
<dbReference type="GO" id="GO:0004175">
    <property type="term" value="F:endopeptidase activity"/>
    <property type="evidence" value="ECO:0000266"/>
    <property type="project" value="RGD"/>
</dbReference>
<dbReference type="GO" id="GO:0004222">
    <property type="term" value="F:metalloendopeptidase activity"/>
    <property type="evidence" value="ECO:0000318"/>
    <property type="project" value="GO_Central"/>
</dbReference>
<dbReference type="GO" id="GO:0008237">
    <property type="term" value="F:metallopeptidase activity"/>
    <property type="evidence" value="ECO:0000266"/>
    <property type="project" value="RGD"/>
</dbReference>
<dbReference type="GO" id="GO:0008233">
    <property type="term" value="F:peptidase activity"/>
    <property type="evidence" value="ECO:0000250"/>
    <property type="project" value="UniProtKB"/>
</dbReference>
<dbReference type="GO" id="GO:0044877">
    <property type="term" value="F:protein-containing complex binding"/>
    <property type="evidence" value="ECO:0000314"/>
    <property type="project" value="RGD"/>
</dbReference>
<dbReference type="GO" id="GO:0008270">
    <property type="term" value="F:zinc ion binding"/>
    <property type="evidence" value="ECO:0007669"/>
    <property type="project" value="InterPro"/>
</dbReference>
<dbReference type="GO" id="GO:0071230">
    <property type="term" value="P:cellular response to amino acid stimulus"/>
    <property type="evidence" value="ECO:0000266"/>
    <property type="project" value="RGD"/>
</dbReference>
<dbReference type="GO" id="GO:0071460">
    <property type="term" value="P:cellular response to cell-matrix adhesion"/>
    <property type="evidence" value="ECO:0000270"/>
    <property type="project" value="RGD"/>
</dbReference>
<dbReference type="GO" id="GO:0071347">
    <property type="term" value="P:cellular response to interleukin-1"/>
    <property type="evidence" value="ECO:0000270"/>
    <property type="project" value="RGD"/>
</dbReference>
<dbReference type="GO" id="GO:0034614">
    <property type="term" value="P:cellular response to reactive oxygen species"/>
    <property type="evidence" value="ECO:0000266"/>
    <property type="project" value="RGD"/>
</dbReference>
<dbReference type="GO" id="GO:0071492">
    <property type="term" value="P:cellular response to UV-A"/>
    <property type="evidence" value="ECO:0000250"/>
    <property type="project" value="UniProtKB"/>
</dbReference>
<dbReference type="GO" id="GO:0030574">
    <property type="term" value="P:collagen catabolic process"/>
    <property type="evidence" value="ECO:0000318"/>
    <property type="project" value="GO_Central"/>
</dbReference>
<dbReference type="GO" id="GO:0030198">
    <property type="term" value="P:extracellular matrix organization"/>
    <property type="evidence" value="ECO:0000318"/>
    <property type="project" value="GO_Central"/>
</dbReference>
<dbReference type="GO" id="GO:0007565">
    <property type="term" value="P:female pregnancy"/>
    <property type="evidence" value="ECO:0000270"/>
    <property type="project" value="RGD"/>
</dbReference>
<dbReference type="GO" id="GO:0045087">
    <property type="term" value="P:innate immune response"/>
    <property type="evidence" value="ECO:0007669"/>
    <property type="project" value="UniProtKB-KW"/>
</dbReference>
<dbReference type="GO" id="GO:0051898">
    <property type="term" value="P:negative regulation of phosphatidylinositol 3-kinase/protein kinase B signal transduction"/>
    <property type="evidence" value="ECO:0000266"/>
    <property type="project" value="RGD"/>
</dbReference>
<dbReference type="GO" id="GO:2000378">
    <property type="term" value="P:negative regulation of reactive oxygen species metabolic process"/>
    <property type="evidence" value="ECO:0000266"/>
    <property type="project" value="RGD"/>
</dbReference>
<dbReference type="GO" id="GO:0030335">
    <property type="term" value="P:positive regulation of cell migration"/>
    <property type="evidence" value="ECO:0000315"/>
    <property type="project" value="RGD"/>
</dbReference>
<dbReference type="GO" id="GO:0031334">
    <property type="term" value="P:positive regulation of protein-containing complex assembly"/>
    <property type="evidence" value="ECO:0000266"/>
    <property type="project" value="RGD"/>
</dbReference>
<dbReference type="GO" id="GO:0030163">
    <property type="term" value="P:protein catabolic process"/>
    <property type="evidence" value="ECO:0000266"/>
    <property type="project" value="RGD"/>
</dbReference>
<dbReference type="GO" id="GO:0006508">
    <property type="term" value="P:proteolysis"/>
    <property type="evidence" value="ECO:0000266"/>
    <property type="project" value="RGD"/>
</dbReference>
<dbReference type="GO" id="GO:0030334">
    <property type="term" value="P:regulation of cell migration"/>
    <property type="evidence" value="ECO:0000266"/>
    <property type="project" value="RGD"/>
</dbReference>
<dbReference type="GO" id="GO:0043200">
    <property type="term" value="P:response to amino acid"/>
    <property type="evidence" value="ECO:0000270"/>
    <property type="project" value="RGD"/>
</dbReference>
<dbReference type="GO" id="GO:0034097">
    <property type="term" value="P:response to cytokine"/>
    <property type="evidence" value="ECO:0000270"/>
    <property type="project" value="RGD"/>
</dbReference>
<dbReference type="GO" id="GO:0032355">
    <property type="term" value="P:response to estradiol"/>
    <property type="evidence" value="ECO:0000270"/>
    <property type="project" value="RGD"/>
</dbReference>
<dbReference type="GO" id="GO:0001666">
    <property type="term" value="P:response to hypoxia"/>
    <property type="evidence" value="ECO:0000270"/>
    <property type="project" value="RGD"/>
</dbReference>
<dbReference type="GO" id="GO:0070555">
    <property type="term" value="P:response to interleukin-1"/>
    <property type="evidence" value="ECO:0000270"/>
    <property type="project" value="RGD"/>
</dbReference>
<dbReference type="GO" id="GO:0032496">
    <property type="term" value="P:response to lipopolysaccharide"/>
    <property type="evidence" value="ECO:0000270"/>
    <property type="project" value="RGD"/>
</dbReference>
<dbReference type="GO" id="GO:0009612">
    <property type="term" value="P:response to mechanical stimulus"/>
    <property type="evidence" value="ECO:0000270"/>
    <property type="project" value="RGD"/>
</dbReference>
<dbReference type="GO" id="GO:0034612">
    <property type="term" value="P:response to tumor necrosis factor"/>
    <property type="evidence" value="ECO:0000270"/>
    <property type="project" value="RGD"/>
</dbReference>
<dbReference type="CDD" id="cd00094">
    <property type="entry name" value="HX"/>
    <property type="match status" value="1"/>
</dbReference>
<dbReference type="CDD" id="cd04278">
    <property type="entry name" value="ZnMc_MMP"/>
    <property type="match status" value="1"/>
</dbReference>
<dbReference type="FunFam" id="3.40.390.10:FF:000007">
    <property type="entry name" value="Collagenase 3"/>
    <property type="match status" value="1"/>
</dbReference>
<dbReference type="FunFam" id="2.110.10.10:FF:000002">
    <property type="entry name" value="Matrix metallopeptidase 3"/>
    <property type="match status" value="1"/>
</dbReference>
<dbReference type="Gene3D" id="3.40.390.10">
    <property type="entry name" value="Collagenase (Catalytic Domain)"/>
    <property type="match status" value="1"/>
</dbReference>
<dbReference type="Gene3D" id="2.110.10.10">
    <property type="entry name" value="Hemopexin-like domain"/>
    <property type="match status" value="1"/>
</dbReference>
<dbReference type="InterPro" id="IPR000585">
    <property type="entry name" value="Hemopexin-like_dom"/>
</dbReference>
<dbReference type="InterPro" id="IPR036375">
    <property type="entry name" value="Hemopexin-like_dom_sf"/>
</dbReference>
<dbReference type="InterPro" id="IPR018487">
    <property type="entry name" value="Hemopexin-like_repeat"/>
</dbReference>
<dbReference type="InterPro" id="IPR018486">
    <property type="entry name" value="Hemopexin_CS"/>
</dbReference>
<dbReference type="InterPro" id="IPR033739">
    <property type="entry name" value="M10A_MMP"/>
</dbReference>
<dbReference type="InterPro" id="IPR024079">
    <property type="entry name" value="MetalloPept_cat_dom_sf"/>
</dbReference>
<dbReference type="InterPro" id="IPR001818">
    <property type="entry name" value="Pept_M10_metallopeptidase"/>
</dbReference>
<dbReference type="InterPro" id="IPR021190">
    <property type="entry name" value="Pept_M10A"/>
</dbReference>
<dbReference type="InterPro" id="IPR021158">
    <property type="entry name" value="Pept_M10A_Zn_BS"/>
</dbReference>
<dbReference type="InterPro" id="IPR006026">
    <property type="entry name" value="Peptidase_Metallo"/>
</dbReference>
<dbReference type="InterPro" id="IPR002477">
    <property type="entry name" value="Peptidoglycan-bd-like"/>
</dbReference>
<dbReference type="InterPro" id="IPR036365">
    <property type="entry name" value="PGBD-like_sf"/>
</dbReference>
<dbReference type="PANTHER" id="PTHR10201">
    <property type="entry name" value="MATRIX METALLOPROTEINASE"/>
    <property type="match status" value="1"/>
</dbReference>
<dbReference type="PANTHER" id="PTHR10201:SF215">
    <property type="entry name" value="STROMELYSIN-1"/>
    <property type="match status" value="1"/>
</dbReference>
<dbReference type="Pfam" id="PF00045">
    <property type="entry name" value="Hemopexin"/>
    <property type="match status" value="4"/>
</dbReference>
<dbReference type="Pfam" id="PF00413">
    <property type="entry name" value="Peptidase_M10"/>
    <property type="match status" value="1"/>
</dbReference>
<dbReference type="Pfam" id="PF01471">
    <property type="entry name" value="PG_binding_1"/>
    <property type="match status" value="1"/>
</dbReference>
<dbReference type="PIRSF" id="PIRSF001191">
    <property type="entry name" value="Peptidase_M10A_matrix"/>
    <property type="match status" value="1"/>
</dbReference>
<dbReference type="PRINTS" id="PR00138">
    <property type="entry name" value="MATRIXIN"/>
</dbReference>
<dbReference type="SMART" id="SM00120">
    <property type="entry name" value="HX"/>
    <property type="match status" value="4"/>
</dbReference>
<dbReference type="SMART" id="SM00235">
    <property type="entry name" value="ZnMc"/>
    <property type="match status" value="1"/>
</dbReference>
<dbReference type="SUPFAM" id="SSF50923">
    <property type="entry name" value="Hemopexin-like domain"/>
    <property type="match status" value="1"/>
</dbReference>
<dbReference type="SUPFAM" id="SSF55486">
    <property type="entry name" value="Metalloproteases ('zincins'), catalytic domain"/>
    <property type="match status" value="1"/>
</dbReference>
<dbReference type="SUPFAM" id="SSF47090">
    <property type="entry name" value="PGBD-like"/>
    <property type="match status" value="1"/>
</dbReference>
<dbReference type="PROSITE" id="PS00546">
    <property type="entry name" value="CYSTEINE_SWITCH"/>
    <property type="match status" value="1"/>
</dbReference>
<dbReference type="PROSITE" id="PS00024">
    <property type="entry name" value="HEMOPEXIN"/>
    <property type="match status" value="1"/>
</dbReference>
<dbReference type="PROSITE" id="PS51642">
    <property type="entry name" value="HEMOPEXIN_2"/>
    <property type="match status" value="4"/>
</dbReference>
<dbReference type="PROSITE" id="PS00142">
    <property type="entry name" value="ZINC_PROTEASE"/>
    <property type="match status" value="1"/>
</dbReference>
<accession>P03957</accession>
<organism>
    <name type="scientific">Rattus norvegicus</name>
    <name type="common">Rat</name>
    <dbReference type="NCBI Taxonomy" id="10116"/>
    <lineage>
        <taxon>Eukaryota</taxon>
        <taxon>Metazoa</taxon>
        <taxon>Chordata</taxon>
        <taxon>Craniata</taxon>
        <taxon>Vertebrata</taxon>
        <taxon>Euteleostomi</taxon>
        <taxon>Mammalia</taxon>
        <taxon>Eutheria</taxon>
        <taxon>Euarchontoglires</taxon>
        <taxon>Glires</taxon>
        <taxon>Rodentia</taxon>
        <taxon>Myomorpha</taxon>
        <taxon>Muroidea</taxon>
        <taxon>Muridae</taxon>
        <taxon>Murinae</taxon>
        <taxon>Rattus</taxon>
    </lineage>
</organism>
<reference key="1">
    <citation type="journal article" date="1985" name="EMBO J.">
        <title>Epidermal growth factor and oncogenes induce transcription of the same cellular mRNA in rat fibroblasts.</title>
        <authorList>
            <person name="Matrisian L.M."/>
            <person name="Glaichenhaus N."/>
            <person name="Gesnel M.-C."/>
            <person name="Breathnach R."/>
        </authorList>
    </citation>
    <scope>NUCLEOTIDE SEQUENCE [MRNA]</scope>
</reference>
<reference key="2">
    <citation type="journal article" date="1986" name="Mol. Cell. Biol.">
        <title>Isolation of the oncogene and epidermal growth factor-induced transin gene: complex control in rat fibroblasts.</title>
        <authorList>
            <person name="Matrisian L.M."/>
            <person name="Gleroy P."/>
            <person name="Ruhlmann C."/>
            <person name="Gesnel M.-C."/>
            <person name="Breathnach R."/>
        </authorList>
    </citation>
    <scope>NUCLEOTIDE SEQUENCE [MRNA]</scope>
</reference>
<reference key="3">
    <citation type="journal article" date="1990" name="J. Biochem.">
        <title>Purification and properties of extracellular matrix-degrading metallo-proteinase overproduced by Rous sarcoma virus-transformed rat liver cell line, and its identification as transin.</title>
        <authorList>
            <person name="Umenishi F."/>
            <person name="Yasumitsu H."/>
            <person name="Ashida Y."/>
            <person name="Yamauti J."/>
            <person name="Umeda M."/>
            <person name="Miyazaki K."/>
        </authorList>
    </citation>
    <scope>PROTEIN SEQUENCE OF 19-28; 110-119; 309-315 AND 316-325</scope>
    <scope>FUNCTION</scope>
    <scope>CATALYTIC ACTIVITY</scope>
    <scope>COFACTOR</scope>
    <scope>ACTIVITY REGULATION</scope>
    <scope>SUBCELLULAR LOCATION</scope>
</reference>
<reference key="4">
    <citation type="journal article" date="1988" name="J. Biol. Chem.">
        <title>Structure-function relationships in the collagenase family member transin.</title>
        <authorList>
            <person name="Sanchez-Lopez R."/>
            <person name="Nicholson R."/>
            <person name="Gesnel M.-C."/>
            <person name="Matrisian L.M."/>
            <person name="Breathnach R."/>
        </authorList>
    </citation>
    <scope>CATALYTIC ACTIVITY</scope>
    <scope>ACTIVITY REGULATION</scope>
    <scope>SUBCELLULAR LOCATION</scope>
    <scope>DOMAIN</scope>
    <scope>PROTEOLYTIC CLEAVAGE</scope>
    <scope>ACTIVE SITE</scope>
    <scope>MUTAGENESIS OF PRO-88; PRO-93; PHE-98; HIS-216; GLU-217 AND HIS-226</scope>
</reference>
<reference key="5">
    <citation type="journal article" date="1991" name="J. Biol. Chem.">
        <title>Mutational analysis of the transin (rat stromelysin) autoinhibitor region demonstrates a role for residues surrounding the cysteine switch.</title>
        <authorList>
            <person name="Park A.J."/>
            <person name="Matrisian L.M."/>
            <person name="Kells A.F."/>
            <person name="Pearson R."/>
            <person name="Yuan Z.Y."/>
            <person name="Navre M."/>
        </authorList>
    </citation>
    <scope>CATALYTIC ACTIVITY</scope>
    <scope>ACTIVITY REGULATION</scope>
    <scope>SUBCELLULAR LOCATION</scope>
    <scope>DOMAIN</scope>
    <scope>PROTEOLYTIC CLEAVAGE</scope>
    <scope>MUTAGENESIS OF MET-85; PRO-88; ARG-89; CYS-90; GLY-91; VAL-92 AND PRO-93</scope>
</reference>
<feature type="signal peptide" evidence="9">
    <location>
        <begin position="1"/>
        <end position="17"/>
    </location>
</feature>
<feature type="propeptide" id="PRO_0000028734" description="Activation peptide" evidence="8">
    <location>
        <begin position="18"/>
        <end position="97"/>
    </location>
</feature>
<feature type="chain" id="PRO_0000028735" description="Stromelysin-1">
    <location>
        <begin position="98"/>
        <end position="475"/>
    </location>
</feature>
<feature type="repeat" description="Hemopexin 1">
    <location>
        <begin position="285"/>
        <end position="334"/>
    </location>
</feature>
<feature type="repeat" description="Hemopexin 2">
    <location>
        <begin position="335"/>
        <end position="381"/>
    </location>
</feature>
<feature type="repeat" description="Hemopexin 3">
    <location>
        <begin position="383"/>
        <end position="431"/>
    </location>
</feature>
<feature type="repeat" description="Hemopexin 4">
    <location>
        <begin position="432"/>
        <end position="475"/>
    </location>
</feature>
<feature type="short sequence motif" description="Cysteine switch" evidence="6 7">
    <location>
        <begin position="88"/>
        <end position="95"/>
    </location>
</feature>
<feature type="active site" evidence="7">
    <location>
        <position position="217"/>
    </location>
</feature>
<feature type="binding site" description="in inhibited form" evidence="2">
    <location>
        <position position="90"/>
    </location>
    <ligand>
        <name>Zn(2+)</name>
        <dbReference type="ChEBI" id="CHEBI:29105"/>
        <label>2</label>
        <note>catalytic</note>
    </ligand>
</feature>
<feature type="binding site" evidence="2">
    <location>
        <position position="122"/>
    </location>
    <ligand>
        <name>Ca(2+)</name>
        <dbReference type="ChEBI" id="CHEBI:29108"/>
        <label>1</label>
    </ligand>
</feature>
<feature type="binding site" evidence="2">
    <location>
        <position position="156"/>
    </location>
    <ligand>
        <name>Ca(2+)</name>
        <dbReference type="ChEBI" id="CHEBI:29108"/>
        <label>2</label>
    </ligand>
</feature>
<feature type="binding site" evidence="2">
    <location>
        <position position="166"/>
    </location>
    <ligand>
        <name>Zn(2+)</name>
        <dbReference type="ChEBI" id="CHEBI:29105"/>
        <label>1</label>
    </ligand>
</feature>
<feature type="binding site" evidence="2">
    <location>
        <position position="168"/>
    </location>
    <ligand>
        <name>Zn(2+)</name>
        <dbReference type="ChEBI" id="CHEBI:29105"/>
        <label>1</label>
    </ligand>
</feature>
<feature type="binding site" evidence="2">
    <location>
        <position position="173"/>
    </location>
    <ligand>
        <name>Ca(2+)</name>
        <dbReference type="ChEBI" id="CHEBI:29108"/>
        <label>3</label>
    </ligand>
</feature>
<feature type="binding site" evidence="2">
    <location>
        <position position="174"/>
    </location>
    <ligand>
        <name>Ca(2+)</name>
        <dbReference type="ChEBI" id="CHEBI:29108"/>
        <label>3</label>
    </ligand>
</feature>
<feature type="binding site" evidence="2">
    <location>
        <position position="176"/>
    </location>
    <ligand>
        <name>Ca(2+)</name>
        <dbReference type="ChEBI" id="CHEBI:29108"/>
        <label>3</label>
    </ligand>
</feature>
<feature type="binding site" evidence="2">
    <location>
        <position position="178"/>
    </location>
    <ligand>
        <name>Ca(2+)</name>
        <dbReference type="ChEBI" id="CHEBI:29108"/>
        <label>3</label>
    </ligand>
</feature>
<feature type="binding site" evidence="2">
    <location>
        <position position="181"/>
    </location>
    <ligand>
        <name>Zn(2+)</name>
        <dbReference type="ChEBI" id="CHEBI:29105"/>
        <label>1</label>
    </ligand>
</feature>
<feature type="binding site" evidence="2">
    <location>
        <position position="188"/>
    </location>
    <ligand>
        <name>Ca(2+)</name>
        <dbReference type="ChEBI" id="CHEBI:29108"/>
        <label>2</label>
    </ligand>
</feature>
<feature type="binding site" evidence="2">
    <location>
        <position position="190"/>
    </location>
    <ligand>
        <name>Ca(2+)</name>
        <dbReference type="ChEBI" id="CHEBI:29108"/>
        <label>2</label>
    </ligand>
</feature>
<feature type="binding site" evidence="2">
    <location>
        <position position="192"/>
    </location>
    <ligand>
        <name>Ca(2+)</name>
        <dbReference type="ChEBI" id="CHEBI:29108"/>
        <label>2</label>
    </ligand>
</feature>
<feature type="binding site" evidence="2">
    <location>
        <position position="194"/>
    </location>
    <ligand>
        <name>Zn(2+)</name>
        <dbReference type="ChEBI" id="CHEBI:29105"/>
        <label>1</label>
    </ligand>
</feature>
<feature type="binding site" evidence="2">
    <location>
        <position position="196"/>
    </location>
    <ligand>
        <name>Ca(2+)</name>
        <dbReference type="ChEBI" id="CHEBI:29108"/>
        <label>3</label>
    </ligand>
</feature>
<feature type="binding site" evidence="2">
    <location>
        <position position="197"/>
    </location>
    <ligand>
        <name>Ca(2+)</name>
        <dbReference type="ChEBI" id="CHEBI:29108"/>
        <label>1</label>
    </ligand>
</feature>
<feature type="binding site" evidence="2">
    <location>
        <position position="199"/>
    </location>
    <ligand>
        <name>Ca(2+)</name>
        <dbReference type="ChEBI" id="CHEBI:29108"/>
        <label>1</label>
    </ligand>
</feature>
<feature type="binding site" evidence="2">
    <location>
        <position position="199"/>
    </location>
    <ligand>
        <name>Ca(2+)</name>
        <dbReference type="ChEBI" id="CHEBI:29108"/>
        <label>3</label>
    </ligand>
</feature>
<feature type="binding site" evidence="2">
    <location>
        <position position="216"/>
    </location>
    <ligand>
        <name>Zn(2+)</name>
        <dbReference type="ChEBI" id="CHEBI:29105"/>
        <label>2</label>
        <note>catalytic</note>
    </ligand>
</feature>
<feature type="binding site" evidence="2">
    <location>
        <position position="220"/>
    </location>
    <ligand>
        <name>Zn(2+)</name>
        <dbReference type="ChEBI" id="CHEBI:29105"/>
        <label>2</label>
        <note>catalytic</note>
    </ligand>
</feature>
<feature type="binding site" evidence="2">
    <location>
        <position position="226"/>
    </location>
    <ligand>
        <name>Zn(2+)</name>
        <dbReference type="ChEBI" id="CHEBI:29105"/>
        <label>2</label>
        <note>catalytic</note>
    </ligand>
</feature>
<feature type="binding site" evidence="2">
    <location>
        <position position="295"/>
    </location>
    <ligand>
        <name>Ca(2+)</name>
        <dbReference type="ChEBI" id="CHEBI:29108"/>
        <label>4</label>
    </ligand>
</feature>
<feature type="binding site" evidence="2">
    <location>
        <position position="387"/>
    </location>
    <ligand>
        <name>Ca(2+)</name>
        <dbReference type="ChEBI" id="CHEBI:29108"/>
        <label>4</label>
    </ligand>
</feature>
<feature type="binding site" evidence="2">
    <location>
        <position position="436"/>
    </location>
    <ligand>
        <name>Ca(2+)</name>
        <dbReference type="ChEBI" id="CHEBI:29108"/>
        <label>4</label>
    </ligand>
</feature>
<feature type="glycosylation site" description="N-linked (GlcNAc...) asparagine" evidence="4">
    <location>
        <position position="118"/>
    </location>
</feature>
<feature type="disulfide bond" evidence="1">
    <location>
        <begin position="288"/>
        <end position="475"/>
    </location>
</feature>
<feature type="mutagenesis site" description="Does not induce autoproteolytic activation." evidence="6">
    <original>M</original>
    <variation>L</variation>
    <location>
        <position position="85"/>
    </location>
</feature>
<feature type="mutagenesis site" description="Does not induce autoproteolytic activation." evidence="6">
    <original>P</original>
    <variation>A</variation>
    <location>
        <position position="88"/>
    </location>
</feature>
<feature type="mutagenesis site" description="Induces partial autoproteolytic activation." evidence="6 7">
    <original>P</original>
    <variation>G</variation>
    <variation>L</variation>
    <location>
        <position position="88"/>
    </location>
</feature>
<feature type="mutagenesis site" description="Induces constitutive autoproteolytic activation." evidence="6">
    <original>R</original>
    <variation>K</variation>
    <variation>L</variation>
    <variation>Q</variation>
    <location>
        <position position="89"/>
    </location>
</feature>
<feature type="mutagenesis site" description="Induces constitutive autoproteolytic activation." evidence="6">
    <original>C</original>
    <variation>S</variation>
    <variation>H</variation>
    <variation>D</variation>
    <location>
        <position position="90"/>
    </location>
</feature>
<feature type="mutagenesis site" description="Induces constitutive autoproteolytic activation." evidence="6">
    <original>G</original>
    <variation>A</variation>
    <location>
        <position position="91"/>
    </location>
</feature>
<feature type="mutagenesis site" description="Induces constitutive autoproteolytic activation." evidence="6">
    <original>V</original>
    <variation>G</variation>
    <location>
        <position position="92"/>
    </location>
</feature>
<feature type="mutagenesis site" description="Induces partial autoproteolytic activation." evidence="6">
    <original>V</original>
    <variation>I</variation>
    <variation>A</variation>
    <location>
        <position position="92"/>
    </location>
</feature>
<feature type="mutagenesis site" description="Does not induce autoproteolytic activation." evidence="6">
    <original>V</original>
    <variation>L</variation>
    <variation>D</variation>
    <location>
        <position position="92"/>
    </location>
</feature>
<feature type="mutagenesis site" description="Induces partial autoproteolytic activation." evidence="6 7">
    <original>P</original>
    <variation>V</variation>
    <variation>G</variation>
    <variation>N</variation>
    <location>
        <position position="93"/>
    </location>
</feature>
<feature type="mutagenesis site" description="Loss of autocleavage without affecting activation by APMA." evidence="7">
    <original>F</original>
    <variation>S</variation>
    <location>
        <position position="98"/>
    </location>
</feature>
<feature type="mutagenesis site" description="Loss of autoproteolytic activation and catalytic activity." evidence="7">
    <original>H</original>
    <variation>L</variation>
    <location>
        <position position="216"/>
    </location>
</feature>
<feature type="mutagenesis site" description="Loss of autoproteolytic activation and catalytic activity." evidence="7">
    <original>E</original>
    <variation>G</variation>
    <location>
        <position position="217"/>
    </location>
</feature>
<feature type="mutagenesis site" description="Loss of autoproteolytic activation and catalytic activity." evidence="7">
    <original>H</original>
    <variation>S</variation>
    <location>
        <position position="226"/>
    </location>
</feature>
<evidence type="ECO:0000250" key="1"/>
<evidence type="ECO:0000250" key="2">
    <source>
        <dbReference type="UniProtKB" id="P03956"/>
    </source>
</evidence>
<evidence type="ECO:0000250" key="3">
    <source>
        <dbReference type="UniProtKB" id="P08254"/>
    </source>
</evidence>
<evidence type="ECO:0000255" key="4"/>
<evidence type="ECO:0000269" key="5">
    <source>
    </source>
</evidence>
<evidence type="ECO:0000269" key="6">
    <source>
    </source>
</evidence>
<evidence type="ECO:0000269" key="7">
    <source>
    </source>
</evidence>
<evidence type="ECO:0000303" key="8">
    <source>
    </source>
</evidence>
<evidence type="ECO:0000305" key="9"/>